<protein>
    <recommendedName>
        <fullName>p-aminobenzoyl-glutamate hydrolase subunit A</fullName>
        <ecNumber>3.5.1.-</ecNumber>
    </recommendedName>
    <alternativeName>
        <fullName>PABA-GLU hydrolase</fullName>
        <shortName>PGH</shortName>
    </alternativeName>
</protein>
<organism>
    <name type="scientific">Escherichia coli (strain K12)</name>
    <dbReference type="NCBI Taxonomy" id="83333"/>
    <lineage>
        <taxon>Bacteria</taxon>
        <taxon>Pseudomonadati</taxon>
        <taxon>Pseudomonadota</taxon>
        <taxon>Gammaproteobacteria</taxon>
        <taxon>Enterobacterales</taxon>
        <taxon>Enterobacteriaceae</taxon>
        <taxon>Escherichia</taxon>
    </lineage>
</organism>
<feature type="chain" id="PRO_0000061958" description="p-aminobenzoyl-glutamate hydrolase subunit A">
    <location>
        <begin position="1"/>
        <end position="436"/>
    </location>
</feature>
<reference key="1">
    <citation type="journal article" date="1996" name="DNA Res.">
        <title>A 570-kb DNA sequence of the Escherichia coli K-12 genome corresponding to the 28.0-40.1 min region on the linkage map.</title>
        <authorList>
            <person name="Aiba H."/>
            <person name="Baba T."/>
            <person name="Fujita K."/>
            <person name="Hayashi K."/>
            <person name="Inada T."/>
            <person name="Isono K."/>
            <person name="Itoh T."/>
            <person name="Kasai H."/>
            <person name="Kashimoto K."/>
            <person name="Kimura S."/>
            <person name="Kitakawa M."/>
            <person name="Kitagawa M."/>
            <person name="Makino K."/>
            <person name="Miki T."/>
            <person name="Mizobuchi K."/>
            <person name="Mori H."/>
            <person name="Mori T."/>
            <person name="Motomura K."/>
            <person name="Nakade S."/>
            <person name="Nakamura Y."/>
            <person name="Nashimoto H."/>
            <person name="Nishio Y."/>
            <person name="Oshima T."/>
            <person name="Saito N."/>
            <person name="Sampei G."/>
            <person name="Seki Y."/>
            <person name="Sivasundaram S."/>
            <person name="Tagami H."/>
            <person name="Takeda J."/>
            <person name="Takemoto K."/>
            <person name="Takeuchi Y."/>
            <person name="Wada C."/>
            <person name="Yamamoto Y."/>
            <person name="Horiuchi T."/>
        </authorList>
    </citation>
    <scope>NUCLEOTIDE SEQUENCE [LARGE SCALE GENOMIC DNA]</scope>
    <source>
        <strain>K12 / W3110 / ATCC 27325 / DSM 5911</strain>
    </source>
</reference>
<reference key="2">
    <citation type="journal article" date="1997" name="Science">
        <title>The complete genome sequence of Escherichia coli K-12.</title>
        <authorList>
            <person name="Blattner F.R."/>
            <person name="Plunkett G. III"/>
            <person name="Bloch C.A."/>
            <person name="Perna N.T."/>
            <person name="Burland V."/>
            <person name="Riley M."/>
            <person name="Collado-Vides J."/>
            <person name="Glasner J.D."/>
            <person name="Rode C.K."/>
            <person name="Mayhew G.F."/>
            <person name="Gregor J."/>
            <person name="Davis N.W."/>
            <person name="Kirkpatrick H.A."/>
            <person name="Goeden M.A."/>
            <person name="Rose D.J."/>
            <person name="Mau B."/>
            <person name="Shao Y."/>
        </authorList>
    </citation>
    <scope>NUCLEOTIDE SEQUENCE [LARGE SCALE GENOMIC DNA]</scope>
    <source>
        <strain>K12 / MG1655 / ATCC 47076</strain>
    </source>
</reference>
<reference key="3">
    <citation type="journal article" date="2006" name="Mol. Syst. Biol.">
        <title>Highly accurate genome sequences of Escherichia coli K-12 strains MG1655 and W3110.</title>
        <authorList>
            <person name="Hayashi K."/>
            <person name="Morooka N."/>
            <person name="Yamamoto Y."/>
            <person name="Fujita K."/>
            <person name="Isono K."/>
            <person name="Choi S."/>
            <person name="Ohtsubo E."/>
            <person name="Baba T."/>
            <person name="Wanner B.L."/>
            <person name="Mori H."/>
            <person name="Horiuchi T."/>
        </authorList>
    </citation>
    <scope>NUCLEOTIDE SEQUENCE [LARGE SCALE GENOMIC DNA]</scope>
    <source>
        <strain>K12 / W3110 / ATCC 27325 / DSM 5911</strain>
    </source>
</reference>
<reference key="4">
    <citation type="journal article" date="2010" name="J. Bacteriol.">
        <title>Purification and characterization of the folate catabolic enzyme p-aminobenzoyl-glutamate hydrolase from Escherichia coli.</title>
        <authorList>
            <person name="Green J.M."/>
            <person name="Hollandsworth R."/>
            <person name="Pitstick L."/>
            <person name="Carter E.L."/>
        </authorList>
    </citation>
    <scope>PROTEIN SEQUENCE OF 1-10</scope>
    <scope>FUNCTION AS A PABA-GLU HYDROLASE</scope>
    <scope>BIOPHYSICOCHEMICAL PROPERTIES</scope>
    <scope>SUBUNIT</scope>
    <scope>COFACTOR</scope>
</reference>
<reference key="5">
    <citation type="journal article" date="1998" name="J. Bacteriol.">
        <title>Characterization of mutations that allow p-aminobenzoyl-glutamate utilization by Escherichia coli.</title>
        <authorList>
            <person name="Hussein M.J."/>
            <person name="Green J.M."/>
            <person name="Nichols B.P."/>
        </authorList>
    </citation>
    <scope>INDUCTION</scope>
</reference>
<reference key="6">
    <citation type="journal article" date="2007" name="J. Bacteriol.">
        <title>Escherichia coli abg genes enable uptake and cleavage of the folate catabolite p-aminobenzoyl-glutamate.</title>
        <authorList>
            <person name="Carter E.L."/>
            <person name="Jager L."/>
            <person name="Gardner L."/>
            <person name="Hall C.C."/>
            <person name="Willis S."/>
            <person name="Green J.M."/>
        </authorList>
    </citation>
    <scope>FUNCTION AS A PABA-GLU HYDROLASE</scope>
</reference>
<proteinExistence type="evidence at protein level"/>
<dbReference type="EC" id="3.5.1.-"/>
<dbReference type="EMBL" id="U00096">
    <property type="protein sequence ID" value="AAC74420.2"/>
    <property type="molecule type" value="Genomic_DNA"/>
</dbReference>
<dbReference type="EMBL" id="AP009048">
    <property type="protein sequence ID" value="BAA14940.2"/>
    <property type="molecule type" value="Genomic_DNA"/>
</dbReference>
<dbReference type="PIR" id="E64883">
    <property type="entry name" value="E64883"/>
</dbReference>
<dbReference type="RefSeq" id="NP_415854.4">
    <property type="nucleotide sequence ID" value="NC_000913.3"/>
</dbReference>
<dbReference type="RefSeq" id="WP_000444929.1">
    <property type="nucleotide sequence ID" value="NZ_SSZK01000012.1"/>
</dbReference>
<dbReference type="SMR" id="P77357"/>
<dbReference type="BioGRID" id="4261854">
    <property type="interactions" value="28"/>
</dbReference>
<dbReference type="BioGRID" id="850109">
    <property type="interactions" value="1"/>
</dbReference>
<dbReference type="ComplexPortal" id="CPX-28">
    <property type="entry name" value="p-aminobenzoyl-glutamate hydrolase complex"/>
</dbReference>
<dbReference type="FunCoup" id="P77357">
    <property type="interactions" value="537"/>
</dbReference>
<dbReference type="IntAct" id="P77357">
    <property type="interactions" value="2"/>
</dbReference>
<dbReference type="STRING" id="511145.b1338"/>
<dbReference type="MEROPS" id="M20.020"/>
<dbReference type="PaxDb" id="511145-b1338"/>
<dbReference type="EnsemblBacteria" id="AAC74420">
    <property type="protein sequence ID" value="AAC74420"/>
    <property type="gene ID" value="b1338"/>
</dbReference>
<dbReference type="GeneID" id="945742"/>
<dbReference type="KEGG" id="ecj:JW5205"/>
<dbReference type="KEGG" id="eco:b1338"/>
<dbReference type="KEGG" id="ecoc:C3026_07835"/>
<dbReference type="PATRIC" id="fig|1411691.4.peg.939"/>
<dbReference type="EchoBASE" id="EB3135"/>
<dbReference type="eggNOG" id="COG1473">
    <property type="taxonomic scope" value="Bacteria"/>
</dbReference>
<dbReference type="HOGENOM" id="CLU_023257_2_1_6"/>
<dbReference type="InParanoid" id="P77357"/>
<dbReference type="OMA" id="YVFERAQ"/>
<dbReference type="OrthoDB" id="9777385at2"/>
<dbReference type="PhylomeDB" id="P77357"/>
<dbReference type="BioCyc" id="EcoCyc:G6670-MONOMER"/>
<dbReference type="BioCyc" id="MetaCyc:G6670-MONOMER"/>
<dbReference type="SABIO-RK" id="P77357"/>
<dbReference type="PRO" id="PR:P77357"/>
<dbReference type="Proteomes" id="UP000000625">
    <property type="component" value="Chromosome"/>
</dbReference>
<dbReference type="GO" id="GO:1902494">
    <property type="term" value="C:catalytic complex"/>
    <property type="evidence" value="ECO:0000353"/>
    <property type="project" value="ComplexPortal"/>
</dbReference>
<dbReference type="GO" id="GO:0005737">
    <property type="term" value="C:cytoplasm"/>
    <property type="evidence" value="ECO:0000314"/>
    <property type="project" value="EcoliWiki"/>
</dbReference>
<dbReference type="GO" id="GO:0016805">
    <property type="term" value="F:dipeptidase activity"/>
    <property type="evidence" value="ECO:0000318"/>
    <property type="project" value="GO_Central"/>
</dbReference>
<dbReference type="GO" id="GO:0071713">
    <property type="term" value="F:para-aminobenzoyl-glutamate hydrolase activity"/>
    <property type="evidence" value="ECO:0000314"/>
    <property type="project" value="UniProtKB"/>
</dbReference>
<dbReference type="GO" id="GO:0046982">
    <property type="term" value="F:protein heterodimerization activity"/>
    <property type="evidence" value="ECO:0000353"/>
    <property type="project" value="EcoliWiki"/>
</dbReference>
<dbReference type="GO" id="GO:0046657">
    <property type="term" value="P:folic acid catabolic process"/>
    <property type="evidence" value="ECO:0000314"/>
    <property type="project" value="ComplexPortal"/>
</dbReference>
<dbReference type="CDD" id="cd05665">
    <property type="entry name" value="M20_Acy1_IAAspH"/>
    <property type="match status" value="1"/>
</dbReference>
<dbReference type="FunFam" id="3.40.630.10:FF:000080">
    <property type="entry name" value="p-aminobenzoyl-glutamate hydrolase subunit A"/>
    <property type="match status" value="1"/>
</dbReference>
<dbReference type="FunFam" id="3.40.630.10:FF:000077">
    <property type="entry name" value="p-aminobenzoyl-glutamate hydrolase, A subunit"/>
    <property type="match status" value="1"/>
</dbReference>
<dbReference type="Gene3D" id="3.40.630.10">
    <property type="entry name" value="Zn peptidases"/>
    <property type="match status" value="2"/>
</dbReference>
<dbReference type="InterPro" id="IPR033845">
    <property type="entry name" value="AbgA"/>
</dbReference>
<dbReference type="InterPro" id="IPR017439">
    <property type="entry name" value="Amidohydrolase"/>
</dbReference>
<dbReference type="InterPro" id="IPR036264">
    <property type="entry name" value="Bact_exopeptidase_dim_dom"/>
</dbReference>
<dbReference type="InterPro" id="IPR002933">
    <property type="entry name" value="Peptidase_M20"/>
</dbReference>
<dbReference type="InterPro" id="IPR052030">
    <property type="entry name" value="Peptidase_M20/M20A_hydrolases"/>
</dbReference>
<dbReference type="InterPro" id="IPR011650">
    <property type="entry name" value="Peptidase_M20_dimer"/>
</dbReference>
<dbReference type="NCBIfam" id="TIGR01891">
    <property type="entry name" value="amidohydrolases"/>
    <property type="match status" value="1"/>
</dbReference>
<dbReference type="PANTHER" id="PTHR30575">
    <property type="entry name" value="PEPTIDASE M20"/>
    <property type="match status" value="1"/>
</dbReference>
<dbReference type="PANTHER" id="PTHR30575:SF3">
    <property type="entry name" value="PEPTIDASE M20 DIMERISATION DOMAIN-CONTAINING PROTEIN"/>
    <property type="match status" value="1"/>
</dbReference>
<dbReference type="Pfam" id="PF07687">
    <property type="entry name" value="M20_dimer"/>
    <property type="match status" value="1"/>
</dbReference>
<dbReference type="Pfam" id="PF01546">
    <property type="entry name" value="Peptidase_M20"/>
    <property type="match status" value="1"/>
</dbReference>
<dbReference type="PIRSF" id="PIRSF005962">
    <property type="entry name" value="Pept_M20D_amidohydro"/>
    <property type="match status" value="1"/>
</dbReference>
<dbReference type="SUPFAM" id="SSF55031">
    <property type="entry name" value="Bacterial exopeptidase dimerisation domain"/>
    <property type="match status" value="1"/>
</dbReference>
<dbReference type="SUPFAM" id="SSF53187">
    <property type="entry name" value="Zn-dependent exopeptidases"/>
    <property type="match status" value="1"/>
</dbReference>
<keyword id="KW-0903">Direct protein sequencing</keyword>
<keyword id="KW-0378">Hydrolase</keyword>
<keyword id="KW-1185">Reference proteome</keyword>
<accession>P77357</accession>
<accession>P76847</accession>
<gene>
    <name type="primary">abgA</name>
    <name type="synonym">ydaJ</name>
    <name type="ordered locus">b1338</name>
    <name type="ordered locus">JW5205</name>
</gene>
<sequence length="436" mass="46588">MESLNQFVNSLAPKLSHWRRDFHHYAESGWVEFRTATLVAEELHQLGYSLALGREVVNESSRMGLPDEFTLQREFERARQQGALAQWIAAFEGGFTGIVATLDTGRPGPVMAFRVDMDALDLSEEQDVSHRPYRDGFASCNAGMMHACGHDGHTAIGLGLAHTLKQFESGLHGVIKLIFQPAEEGTRGARAMVDAGVVDDVDYFTAVHIGTGVPAGTVVCGSDNFMATTKFDAHFTGTAAHAGAKPEDGHNALLAAAQATLALHAIAPHSEGASRVNVGVMQAGSGRNVVPASALLKVETRGASDVINQYVFDRAQQAIQGAATMYGVGVETRLMGAATASSPSPQWVAWLQSQAAQVAGVNQAIERVEAPAGSEDATLMMARVQQHQGQASYVVFGTQLAAGHHNEKFDFDEQVLAIAVETLARTALNFPWTRGI</sequence>
<evidence type="ECO:0000269" key="1">
    <source>
    </source>
</evidence>
<evidence type="ECO:0000269" key="2">
    <source>
    </source>
</evidence>
<evidence type="ECO:0000269" key="3">
    <source>
    </source>
</evidence>
<evidence type="ECO:0000305" key="4"/>
<comment type="function">
    <text evidence="1 2">Component of the p-aminobenzoyl-glutamate hydrolase multicomponent enzyme system which catalyzes the cleavage of p-aminobenzoyl-glutamate (PABA-GLU) to form p-aminobenzoate (PABA) and glutamate. AbgAB does not degrade dipeptides and the physiological role of abgABT should be clarified.</text>
</comment>
<comment type="cofactor">
    <cofactor evidence="2">
        <name>Mn(2+)</name>
        <dbReference type="ChEBI" id="CHEBI:29035"/>
    </cofactor>
</comment>
<comment type="biophysicochemical properties">
    <kinetics>
        <KM evidence="2">60 uM for PABA-GLU (at pH 8.5)</KM>
    </kinetics>
</comment>
<comment type="subunit">
    <text evidence="2">Forms a heterodimer with AbgB.</text>
</comment>
<comment type="interaction">
    <interactant intactId="EBI-9155452">
        <id>P77357</id>
    </interactant>
    <interactant intactId="EBI-1123629">
        <id>P76052</id>
        <label>abgB</label>
    </interactant>
    <organismsDiffer>false</organismsDiffer>
    <experiments>2</experiments>
</comment>
<comment type="induction">
    <text evidence="3">Could be transcriptionally regulated by AbgR.</text>
</comment>
<comment type="similarity">
    <text evidence="4">Belongs to the peptidase M20 family.</text>
</comment>
<name>ABGA_ECOLI</name>